<gene>
    <name type="primary">BGN</name>
</gene>
<keyword id="KW-1015">Disulfide bond</keyword>
<keyword id="KW-0272">Extracellular matrix</keyword>
<keyword id="KW-0325">Glycoprotein</keyword>
<keyword id="KW-0433">Leucine-rich repeat</keyword>
<keyword id="KW-0654">Proteoglycan</keyword>
<keyword id="KW-1185">Reference proteome</keyword>
<keyword id="KW-0677">Repeat</keyword>
<keyword id="KW-0964">Secreted</keyword>
<keyword id="KW-0732">Signal</keyword>
<protein>
    <recommendedName>
        <fullName>Biglycan</fullName>
    </recommendedName>
    <alternativeName>
        <fullName>Bone/cartilage proteoglycan I</fullName>
    </alternativeName>
    <alternativeName>
        <fullName>PG-S1</fullName>
    </alternativeName>
</protein>
<sequence>MWPLWLVASLLALSQALPFEQKGFWDFTLDDGLPMLNDEEASGAETTSGVPDLDALTPTYSAMCPFGCHCHLRVVQCSDLGLKAVPKEISPDTMLLDLQNNDISELRADDFKGLHHLYALVLVNNKISKIHEKAFSPLRKLQKLYISKNHLVEIPPNLPSSLVELRIHDNRIRKVPKGVFSGLRNMNCIEMGGNPLENSGFEPGAFDGLKLNYLRISEAKLTGIPKDLPETLNELHLDHNKIQAIELEDLLRYSKLYRLGLGHNQIRMIENGSLSFLPTLRELHLDNNKLSRVPSGLPDLKLLQVVYLHTNNITKVGVNDFCPVGFGVKRAYYNGISLFNNPVPYWEVQPATFRCVTDRLAIQFGNYKK</sequence>
<dbReference type="EMBL" id="U83140">
    <property type="protein sequence ID" value="AAB51244.1"/>
    <property type="molecule type" value="mRNA"/>
</dbReference>
<dbReference type="RefSeq" id="NP_001003229.1">
    <property type="nucleotide sequence ID" value="NM_001003229.1"/>
</dbReference>
<dbReference type="SMR" id="O02678"/>
<dbReference type="FunCoup" id="O02678">
    <property type="interactions" value="12"/>
</dbReference>
<dbReference type="STRING" id="9615.ENSCAFP00000028297"/>
<dbReference type="GlyCosmos" id="O02678">
    <property type="glycosylation" value="4 sites, No reported glycans"/>
</dbReference>
<dbReference type="CPTAC" id="CPTAC-3273"/>
<dbReference type="CPTAC" id="CPTAC-3278"/>
<dbReference type="PaxDb" id="9612-ENSCAFP00000028297"/>
<dbReference type="GeneID" id="403905"/>
<dbReference type="KEGG" id="cfa:403905"/>
<dbReference type="CTD" id="633"/>
<dbReference type="eggNOG" id="KOG0619">
    <property type="taxonomic scope" value="Eukaryota"/>
</dbReference>
<dbReference type="InParanoid" id="O02678"/>
<dbReference type="OrthoDB" id="1111193at2759"/>
<dbReference type="Proteomes" id="UP000002254">
    <property type="component" value="Unplaced"/>
</dbReference>
<dbReference type="Proteomes" id="UP000694429">
    <property type="component" value="Unplaced"/>
</dbReference>
<dbReference type="Proteomes" id="UP000694542">
    <property type="component" value="Unplaced"/>
</dbReference>
<dbReference type="Proteomes" id="UP000805418">
    <property type="component" value="Unplaced"/>
</dbReference>
<dbReference type="GO" id="GO:0005615">
    <property type="term" value="C:extracellular space"/>
    <property type="evidence" value="ECO:0000318"/>
    <property type="project" value="GO_Central"/>
</dbReference>
<dbReference type="FunFam" id="3.80.10.10:FF:000038">
    <property type="entry name" value="Biglycan"/>
    <property type="match status" value="1"/>
</dbReference>
<dbReference type="Gene3D" id="3.80.10.10">
    <property type="entry name" value="Ribonuclease Inhibitor"/>
    <property type="match status" value="1"/>
</dbReference>
<dbReference type="InterPro" id="IPR001611">
    <property type="entry name" value="Leu-rich_rpt"/>
</dbReference>
<dbReference type="InterPro" id="IPR003591">
    <property type="entry name" value="Leu-rich_rpt_typical-subtyp"/>
</dbReference>
<dbReference type="InterPro" id="IPR032675">
    <property type="entry name" value="LRR_dom_sf"/>
</dbReference>
<dbReference type="InterPro" id="IPR000372">
    <property type="entry name" value="LRRNT"/>
</dbReference>
<dbReference type="InterPro" id="IPR050333">
    <property type="entry name" value="SLRP"/>
</dbReference>
<dbReference type="InterPro" id="IPR016352">
    <property type="entry name" value="SLRP_I_decor/aspor/byglycan"/>
</dbReference>
<dbReference type="PANTHER" id="PTHR45712">
    <property type="entry name" value="AGAP008170-PA"/>
    <property type="match status" value="1"/>
</dbReference>
<dbReference type="PANTHER" id="PTHR45712:SF11">
    <property type="entry name" value="BIGLYCAN"/>
    <property type="match status" value="1"/>
</dbReference>
<dbReference type="Pfam" id="PF13855">
    <property type="entry name" value="LRR_8"/>
    <property type="match status" value="3"/>
</dbReference>
<dbReference type="Pfam" id="PF01462">
    <property type="entry name" value="LRRNT"/>
    <property type="match status" value="1"/>
</dbReference>
<dbReference type="PIRSF" id="PIRSF002490">
    <property type="entry name" value="SLRP_I"/>
    <property type="match status" value="1"/>
</dbReference>
<dbReference type="SMART" id="SM00369">
    <property type="entry name" value="LRR_TYP"/>
    <property type="match status" value="8"/>
</dbReference>
<dbReference type="SMART" id="SM00013">
    <property type="entry name" value="LRRNT"/>
    <property type="match status" value="1"/>
</dbReference>
<dbReference type="SUPFAM" id="SSF52058">
    <property type="entry name" value="L domain-like"/>
    <property type="match status" value="1"/>
</dbReference>
<dbReference type="PROSITE" id="PS51450">
    <property type="entry name" value="LRR"/>
    <property type="match status" value="8"/>
</dbReference>
<name>PGS1_CANLF</name>
<proteinExistence type="evidence at transcript level"/>
<comment type="function">
    <text evidence="1">May be involved in collagen fiber assembly.</text>
</comment>
<comment type="subunit">
    <text evidence="1">Homodimer. Forms a ternary complex with MFAP2 and ELN (By similarity).</text>
</comment>
<comment type="subcellular location">
    <subcellularLocation>
        <location evidence="1">Secreted</location>
        <location evidence="1">Extracellular space</location>
        <location evidence="1">Extracellular matrix</location>
    </subcellularLocation>
</comment>
<comment type="PTM">
    <text evidence="1">The two attached glycosaminoglycan chains can be either chondroitin sulfate or dermatan sulfate.</text>
</comment>
<comment type="similarity">
    <text evidence="5">Belongs to the small leucine-rich proteoglycan (SLRP) family. SLRP class I subfamily.</text>
</comment>
<reference key="1">
    <citation type="submission" date="1996-12" db="EMBL/GenBank/DDBJ databases">
        <title>Complete coding sequence of canine biglycan.</title>
        <authorList>
            <person name="Glant T.T."/>
        </authorList>
    </citation>
    <scope>NUCLEOTIDE SEQUENCE [MRNA]</scope>
</reference>
<feature type="signal peptide" evidence="3">
    <location>
        <begin position="1"/>
        <end position="16"/>
    </location>
</feature>
<feature type="propeptide" id="PRO_0000032687" evidence="2">
    <location>
        <begin position="17"/>
        <end position="37"/>
    </location>
</feature>
<feature type="chain" id="PRO_0000032688" description="Biglycan">
    <location>
        <begin position="38"/>
        <end position="369"/>
    </location>
</feature>
<feature type="repeat" description="LRR 1">
    <location>
        <begin position="83"/>
        <end position="103"/>
    </location>
</feature>
<feature type="repeat" description="LRR 2">
    <location>
        <begin position="104"/>
        <end position="127"/>
    </location>
</feature>
<feature type="repeat" description="LRR 3">
    <location>
        <begin position="128"/>
        <end position="151"/>
    </location>
</feature>
<feature type="repeat" description="LRR 4">
    <location>
        <begin position="152"/>
        <end position="172"/>
    </location>
</feature>
<feature type="repeat" description="LRR 5">
    <location>
        <begin position="173"/>
        <end position="196"/>
    </location>
</feature>
<feature type="repeat" description="LRR 6">
    <location>
        <begin position="197"/>
        <end position="221"/>
    </location>
</feature>
<feature type="repeat" description="LRR 7">
    <location>
        <begin position="222"/>
        <end position="242"/>
    </location>
</feature>
<feature type="repeat" description="LRR 8">
    <location>
        <begin position="243"/>
        <end position="266"/>
    </location>
</feature>
<feature type="repeat" description="LRR 9">
    <location>
        <begin position="267"/>
        <end position="290"/>
    </location>
</feature>
<feature type="repeat" description="LRR 10">
    <location>
        <begin position="291"/>
        <end position="313"/>
    </location>
</feature>
<feature type="repeat" description="LRR 11">
    <location>
        <begin position="314"/>
        <end position="343"/>
    </location>
</feature>
<feature type="repeat" description="LRR 12">
    <location>
        <begin position="344"/>
        <end position="369"/>
    </location>
</feature>
<feature type="glycosylation site" description="O-linked (Xyl...) (glycosaminoglycan) serine" evidence="2">
    <location>
        <position position="42"/>
    </location>
</feature>
<feature type="glycosylation site" description="O-linked (Xyl...) (glycosaminoglycan) serine" evidence="2">
    <location>
        <position position="48"/>
    </location>
</feature>
<feature type="glycosylation site" description="N-linked (GlcNAc...) asparagine" evidence="4">
    <location>
        <position position="271"/>
    </location>
</feature>
<feature type="glycosylation site" description="N-linked (GlcNAc...) asparagine" evidence="4">
    <location>
        <position position="312"/>
    </location>
</feature>
<feature type="disulfide bond" evidence="1">
    <location>
        <begin position="64"/>
        <end position="70"/>
    </location>
</feature>
<feature type="disulfide bond" evidence="1">
    <location>
        <begin position="68"/>
        <end position="77"/>
    </location>
</feature>
<feature type="disulfide bond" evidence="1">
    <location>
        <begin position="322"/>
        <end position="355"/>
    </location>
</feature>
<organism>
    <name type="scientific">Canis lupus familiaris</name>
    <name type="common">Dog</name>
    <name type="synonym">Canis familiaris</name>
    <dbReference type="NCBI Taxonomy" id="9615"/>
    <lineage>
        <taxon>Eukaryota</taxon>
        <taxon>Metazoa</taxon>
        <taxon>Chordata</taxon>
        <taxon>Craniata</taxon>
        <taxon>Vertebrata</taxon>
        <taxon>Euteleostomi</taxon>
        <taxon>Mammalia</taxon>
        <taxon>Eutheria</taxon>
        <taxon>Laurasiatheria</taxon>
        <taxon>Carnivora</taxon>
        <taxon>Caniformia</taxon>
        <taxon>Canidae</taxon>
        <taxon>Canis</taxon>
    </lineage>
</organism>
<evidence type="ECO:0000250" key="1"/>
<evidence type="ECO:0000250" key="2">
    <source>
        <dbReference type="UniProtKB" id="P21810"/>
    </source>
</evidence>
<evidence type="ECO:0000250" key="3">
    <source>
        <dbReference type="UniProtKB" id="P47853"/>
    </source>
</evidence>
<evidence type="ECO:0000255" key="4"/>
<evidence type="ECO:0000305" key="5"/>
<accession>O02678</accession>